<gene>
    <name type="ordered locus">lin2528</name>
</gene>
<name>DCEC_LISIN</name>
<sequence length="467" mass="53690">MLYSENDKRKHESYRIPLFGSEEESTSIPKYVLKKEPMEPRIAYQLVKDQLMDEGNARQNLATFCQTYMEKEAEILMAETLEKNAIDKSEYPQTAELENRCVNILADLWNAPKEMSYLGTSTVGSSEACMLGGLAMKFRWRNNAEKRGLDIQAKRPNLIISSGYQVCWEKFCVYWDVDMRVVPMDKEHLSLDVEKVFELVDEYTIGIVGILGITYTGKFDDIALLDEKVEAYNEANEHQLVIHIDGASGAMFTPFVNPELPWDFRLKNVVSINTSGHKYGLVYPGVGWILWKDKEYLPKELIFEVSYLGGSMPTMAINFSRSASQIIGQYYNFLRYGFEGYREIHEKTKKTALYLSKTVEKSGYFEIINDGSNLPIVCYKLKDDLDVEWTLYDLADQLLMKGWQVPAYPLPADLSDTIIQRFVCRADLGYNVAEEFAADFADALHNLEHARVLYHDKERNDSYGFTH</sequence>
<reference key="1">
    <citation type="journal article" date="2001" name="Science">
        <title>Comparative genomics of Listeria species.</title>
        <authorList>
            <person name="Glaser P."/>
            <person name="Frangeul L."/>
            <person name="Buchrieser C."/>
            <person name="Rusniok C."/>
            <person name="Amend A."/>
            <person name="Baquero F."/>
            <person name="Berche P."/>
            <person name="Bloecker H."/>
            <person name="Brandt P."/>
            <person name="Chakraborty T."/>
            <person name="Charbit A."/>
            <person name="Chetouani F."/>
            <person name="Couve E."/>
            <person name="de Daruvar A."/>
            <person name="Dehoux P."/>
            <person name="Domann E."/>
            <person name="Dominguez-Bernal G."/>
            <person name="Duchaud E."/>
            <person name="Durant L."/>
            <person name="Dussurget O."/>
            <person name="Entian K.-D."/>
            <person name="Fsihi H."/>
            <person name="Garcia-del Portillo F."/>
            <person name="Garrido P."/>
            <person name="Gautier L."/>
            <person name="Goebel W."/>
            <person name="Gomez-Lopez N."/>
            <person name="Hain T."/>
            <person name="Hauf J."/>
            <person name="Jackson D."/>
            <person name="Jones L.-M."/>
            <person name="Kaerst U."/>
            <person name="Kreft J."/>
            <person name="Kuhn M."/>
            <person name="Kunst F."/>
            <person name="Kurapkat G."/>
            <person name="Madueno E."/>
            <person name="Maitournam A."/>
            <person name="Mata Vicente J."/>
            <person name="Ng E."/>
            <person name="Nedjari H."/>
            <person name="Nordsiek G."/>
            <person name="Novella S."/>
            <person name="de Pablos B."/>
            <person name="Perez-Diaz J.-C."/>
            <person name="Purcell R."/>
            <person name="Remmel B."/>
            <person name="Rose M."/>
            <person name="Schlueter T."/>
            <person name="Simoes N."/>
            <person name="Tierrez A."/>
            <person name="Vazquez-Boland J.-A."/>
            <person name="Voss H."/>
            <person name="Wehland J."/>
            <person name="Cossart P."/>
        </authorList>
    </citation>
    <scope>NUCLEOTIDE SEQUENCE [LARGE SCALE GENOMIC DNA]</scope>
    <source>
        <strain>ATCC BAA-680 / CLIP 11262</strain>
    </source>
</reference>
<evidence type="ECO:0000250" key="1"/>
<evidence type="ECO:0000305" key="2"/>
<feature type="chain" id="PRO_0000146991" description="Probable glutamate decarboxylase gamma">
    <location>
        <begin position="1"/>
        <end position="467"/>
    </location>
</feature>
<feature type="modified residue" description="N6-(pyridoxal phosphate)lysine" evidence="1">
    <location>
        <position position="278"/>
    </location>
</feature>
<organism>
    <name type="scientific">Listeria innocua serovar 6a (strain ATCC BAA-680 / CLIP 11262)</name>
    <dbReference type="NCBI Taxonomy" id="272626"/>
    <lineage>
        <taxon>Bacteria</taxon>
        <taxon>Bacillati</taxon>
        <taxon>Bacillota</taxon>
        <taxon>Bacilli</taxon>
        <taxon>Bacillales</taxon>
        <taxon>Listeriaceae</taxon>
        <taxon>Listeria</taxon>
    </lineage>
</organism>
<proteinExistence type="inferred from homology"/>
<accession>Q928K4</accession>
<keyword id="KW-0210">Decarboxylase</keyword>
<keyword id="KW-0456">Lyase</keyword>
<keyword id="KW-0663">Pyridoxal phosphate</keyword>
<protein>
    <recommendedName>
        <fullName>Probable glutamate decarboxylase gamma</fullName>
        <shortName>GAD-gamma</shortName>
        <ecNumber>4.1.1.15</ecNumber>
    </recommendedName>
</protein>
<comment type="catalytic activity">
    <reaction>
        <text>L-glutamate + H(+) = 4-aminobutanoate + CO2</text>
        <dbReference type="Rhea" id="RHEA:17785"/>
        <dbReference type="ChEBI" id="CHEBI:15378"/>
        <dbReference type="ChEBI" id="CHEBI:16526"/>
        <dbReference type="ChEBI" id="CHEBI:29985"/>
        <dbReference type="ChEBI" id="CHEBI:59888"/>
        <dbReference type="EC" id="4.1.1.15"/>
    </reaction>
</comment>
<comment type="cofactor">
    <cofactor evidence="1">
        <name>pyridoxal 5'-phosphate</name>
        <dbReference type="ChEBI" id="CHEBI:597326"/>
    </cofactor>
</comment>
<comment type="similarity">
    <text evidence="2">Belongs to the group II decarboxylase family.</text>
</comment>
<dbReference type="EC" id="4.1.1.15"/>
<dbReference type="EMBL" id="AL596172">
    <property type="protein sequence ID" value="CAC97755.1"/>
    <property type="molecule type" value="Genomic_DNA"/>
</dbReference>
<dbReference type="PIR" id="AC1748">
    <property type="entry name" value="AC1748"/>
</dbReference>
<dbReference type="RefSeq" id="WP_010991237.1">
    <property type="nucleotide sequence ID" value="NC_003212.1"/>
</dbReference>
<dbReference type="SMR" id="Q928K4"/>
<dbReference type="STRING" id="272626.gene:17566908"/>
<dbReference type="KEGG" id="lin:lin2528"/>
<dbReference type="eggNOG" id="COG0076">
    <property type="taxonomic scope" value="Bacteria"/>
</dbReference>
<dbReference type="HOGENOM" id="CLU_019582_2_1_9"/>
<dbReference type="OrthoDB" id="9803665at2"/>
<dbReference type="Proteomes" id="UP000002513">
    <property type="component" value="Chromosome"/>
</dbReference>
<dbReference type="GO" id="GO:0005829">
    <property type="term" value="C:cytosol"/>
    <property type="evidence" value="ECO:0007669"/>
    <property type="project" value="TreeGrafter"/>
</dbReference>
<dbReference type="GO" id="GO:0004058">
    <property type="term" value="F:aromatic-L-amino-acid decarboxylase activity"/>
    <property type="evidence" value="ECO:0007669"/>
    <property type="project" value="UniProtKB-ARBA"/>
</dbReference>
<dbReference type="GO" id="GO:0004351">
    <property type="term" value="F:glutamate decarboxylase activity"/>
    <property type="evidence" value="ECO:0007669"/>
    <property type="project" value="UniProtKB-EC"/>
</dbReference>
<dbReference type="GO" id="GO:0030170">
    <property type="term" value="F:pyridoxal phosphate binding"/>
    <property type="evidence" value="ECO:0007669"/>
    <property type="project" value="InterPro"/>
</dbReference>
<dbReference type="GO" id="GO:0006538">
    <property type="term" value="P:glutamate catabolic process"/>
    <property type="evidence" value="ECO:0007669"/>
    <property type="project" value="TreeGrafter"/>
</dbReference>
<dbReference type="CDD" id="cd06450">
    <property type="entry name" value="DOPA_deC_like"/>
    <property type="match status" value="1"/>
</dbReference>
<dbReference type="FunFam" id="3.40.640.10:FF:000017">
    <property type="entry name" value="Glutamate decarboxylase"/>
    <property type="match status" value="1"/>
</dbReference>
<dbReference type="FunFam" id="4.10.280.50:FF:000001">
    <property type="entry name" value="Glutamate decarboxylase"/>
    <property type="match status" value="1"/>
</dbReference>
<dbReference type="Gene3D" id="3.90.1150.160">
    <property type="match status" value="1"/>
</dbReference>
<dbReference type="Gene3D" id="4.10.280.50">
    <property type="match status" value="1"/>
</dbReference>
<dbReference type="Gene3D" id="3.40.640.10">
    <property type="entry name" value="Type I PLP-dependent aspartate aminotransferase-like (Major domain)"/>
    <property type="match status" value="1"/>
</dbReference>
<dbReference type="InterPro" id="IPR010107">
    <property type="entry name" value="Glutamate_decarboxylase"/>
</dbReference>
<dbReference type="InterPro" id="IPR002129">
    <property type="entry name" value="PyrdxlP-dep_de-COase"/>
</dbReference>
<dbReference type="InterPro" id="IPR015424">
    <property type="entry name" value="PyrdxlP-dep_Trfase"/>
</dbReference>
<dbReference type="InterPro" id="IPR015421">
    <property type="entry name" value="PyrdxlP-dep_Trfase_major"/>
</dbReference>
<dbReference type="NCBIfam" id="TIGR01788">
    <property type="entry name" value="Glu-decarb-GAD"/>
    <property type="match status" value="1"/>
</dbReference>
<dbReference type="PANTHER" id="PTHR43321">
    <property type="entry name" value="GLUTAMATE DECARBOXYLASE"/>
    <property type="match status" value="1"/>
</dbReference>
<dbReference type="PANTHER" id="PTHR43321:SF3">
    <property type="entry name" value="GLUTAMATE DECARBOXYLASE"/>
    <property type="match status" value="1"/>
</dbReference>
<dbReference type="Pfam" id="PF00282">
    <property type="entry name" value="Pyridoxal_deC"/>
    <property type="match status" value="1"/>
</dbReference>
<dbReference type="SUPFAM" id="SSF53383">
    <property type="entry name" value="PLP-dependent transferases"/>
    <property type="match status" value="1"/>
</dbReference>